<accession>Q5GJ04</accession>
<sequence length="695" mass="78829">MTFLLVSLLAFLSLGSGCHHRICHCWHRVFLCQESKVTEIPSDLPRNAVELRFVLTKLRVIPKGAFSGFGDLEKIEISQNDVLEVIEANVFFNLSKLHEIRIEKANNLLYIDTDAFQNLPNLRYLLISNTGIKHFPAVHKIQSLQKVLLDIQDNINIHTVERNSFMGLSFESMILWLNKNGIQEIHNCAFNGTQLDELNLSDNINLEELPNDVFQGASGPVILDISRTRIHSLPSYGLENIKKLRAKSTYNLKKLPSLDKFVALMEASLTYPSHCCAFANWRRPISELHPICNKSILRQEVDDMTQARGQRVSLAEDEESSYTKGFDMMYSEFDYDLCNEVVDVTCSPKPDAFNPCEDIMGYDILRVLIWFISILAITGNIIVLMILITSQYKLTVPRFLMCNLAFADLCIGIYLLLIASVDIYTKSQYHNYAIDWQTGAGCDAAGFFTVFASELSVYTLTVITLERWHTITHAMQLECKVQLRHAAIIMLLGWIFAFMVALFPIFGISSYMKVSICLPMDIDSPLSQLYVMSLLVLNVLAFVVICCCYAHIYLTVRNPNIVSSSSDTKIAKRMAMLIFTDFLCMAPISFFAISASLKVPLITVSKSKILLVLFYPINSCANPFLYAIFTKNFRRDFFILLSKFGCYEVQAQTYRSETSSTAHNFHPRNGHCPPAPRVTNSSNYILIPLRHLAKN</sequence>
<keyword id="KW-1003">Cell membrane</keyword>
<keyword id="KW-1015">Disulfide bond</keyword>
<keyword id="KW-0297">G-protein coupled receptor</keyword>
<keyword id="KW-0325">Glycoprotein</keyword>
<keyword id="KW-0433">Leucine-rich repeat</keyword>
<keyword id="KW-0472">Membrane</keyword>
<keyword id="KW-0675">Receptor</keyword>
<keyword id="KW-1185">Reference proteome</keyword>
<keyword id="KW-0677">Repeat</keyword>
<keyword id="KW-0732">Signal</keyword>
<keyword id="KW-0765">Sulfation</keyword>
<keyword id="KW-0807">Transducer</keyword>
<keyword id="KW-0812">Transmembrane</keyword>
<keyword id="KW-1133">Transmembrane helix</keyword>
<feature type="signal peptide" evidence="3">
    <location>
        <begin position="1"/>
        <end position="17"/>
    </location>
</feature>
<feature type="chain" id="PRO_0000041831" description="Follicle-stimulating hormone receptor">
    <location>
        <begin position="18"/>
        <end position="695"/>
    </location>
</feature>
<feature type="topological domain" description="Extracellular" evidence="3">
    <location>
        <begin position="18"/>
        <end position="366"/>
    </location>
</feature>
<feature type="transmembrane region" description="Helical; Name=1" evidence="3">
    <location>
        <begin position="367"/>
        <end position="387"/>
    </location>
</feature>
<feature type="topological domain" description="Cytoplasmic" evidence="3">
    <location>
        <begin position="388"/>
        <end position="398"/>
    </location>
</feature>
<feature type="transmembrane region" description="Helical; Name=2" evidence="3">
    <location>
        <begin position="399"/>
        <end position="419"/>
    </location>
</feature>
<feature type="topological domain" description="Extracellular" evidence="3">
    <location>
        <begin position="420"/>
        <end position="444"/>
    </location>
</feature>
<feature type="transmembrane region" description="Helical; Name=3" evidence="3">
    <location>
        <begin position="445"/>
        <end position="465"/>
    </location>
</feature>
<feature type="topological domain" description="Cytoplasmic" evidence="3">
    <location>
        <begin position="466"/>
        <end position="487"/>
    </location>
</feature>
<feature type="transmembrane region" description="Helical; Name=4" evidence="3">
    <location>
        <begin position="488"/>
        <end position="508"/>
    </location>
</feature>
<feature type="topological domain" description="Extracellular" evidence="3">
    <location>
        <begin position="509"/>
        <end position="528"/>
    </location>
</feature>
<feature type="transmembrane region" description="Helical; Name=5" evidence="3">
    <location>
        <begin position="529"/>
        <end position="550"/>
    </location>
</feature>
<feature type="topological domain" description="Cytoplasmic" evidence="3">
    <location>
        <begin position="551"/>
        <end position="573"/>
    </location>
</feature>
<feature type="transmembrane region" description="Helical; Name=6" evidence="3">
    <location>
        <begin position="574"/>
        <end position="594"/>
    </location>
</feature>
<feature type="topological domain" description="Extracellular" evidence="3">
    <location>
        <begin position="595"/>
        <end position="608"/>
    </location>
</feature>
<feature type="transmembrane region" description="Helical; Name=7" evidence="3">
    <location>
        <begin position="609"/>
        <end position="629"/>
    </location>
</feature>
<feature type="topological domain" description="Cytoplasmic" evidence="3">
    <location>
        <begin position="630"/>
        <end position="695"/>
    </location>
</feature>
<feature type="domain" description="LRRNT">
    <location>
        <begin position="18"/>
        <end position="46"/>
    </location>
</feature>
<feature type="repeat" description="LRR 1">
    <location>
        <begin position="49"/>
        <end position="72"/>
    </location>
</feature>
<feature type="repeat" description="LRR 2">
    <location>
        <begin position="73"/>
        <end position="97"/>
    </location>
</feature>
<feature type="repeat" description="LRR 3">
    <location>
        <begin position="98"/>
        <end position="118"/>
    </location>
</feature>
<feature type="repeat" description="LRR 4">
    <location>
        <begin position="119"/>
        <end position="143"/>
    </location>
</feature>
<feature type="repeat" description="LRR 5">
    <location>
        <begin position="144"/>
        <end position="169"/>
    </location>
</feature>
<feature type="repeat" description="LRR 6">
    <location>
        <begin position="170"/>
        <end position="192"/>
    </location>
</feature>
<feature type="repeat" description="LRR 7">
    <location>
        <begin position="193"/>
        <end position="216"/>
    </location>
</feature>
<feature type="repeat" description="LRR 8">
    <location>
        <begin position="217"/>
        <end position="240"/>
    </location>
</feature>
<feature type="repeat" description="LRR 9">
    <location>
        <begin position="241"/>
        <end position="259"/>
    </location>
</feature>
<feature type="modified residue" description="Sulfotyrosine" evidence="2">
    <location>
        <position position="335"/>
    </location>
</feature>
<feature type="glycosylation site" description="N-linked (GlcNAc...) asparagine" evidence="3">
    <location>
        <position position="93"/>
    </location>
</feature>
<feature type="glycosylation site" description="N-linked (GlcNAc...) asparagine" evidence="3">
    <location>
        <position position="191"/>
    </location>
</feature>
<feature type="glycosylation site" description="N-linked (GlcNAc...) asparagine" evidence="3">
    <location>
        <position position="199"/>
    </location>
</feature>
<feature type="glycosylation site" description="N-linked (GlcNAc...) asparagine" evidence="3">
    <location>
        <position position="293"/>
    </location>
</feature>
<feature type="disulfide bond" evidence="4">
    <location>
        <begin position="18"/>
        <end position="25"/>
    </location>
</feature>
<feature type="disulfide bond" evidence="4">
    <location>
        <begin position="23"/>
        <end position="32"/>
    </location>
</feature>
<feature type="disulfide bond" evidence="2">
    <location>
        <begin position="275"/>
        <end position="346"/>
    </location>
</feature>
<feature type="disulfide bond" evidence="2">
    <location>
        <begin position="276"/>
        <end position="356"/>
    </location>
</feature>
<feature type="disulfide bond" evidence="2">
    <location>
        <begin position="276"/>
        <end position="292"/>
    </location>
</feature>
<feature type="disulfide bond" evidence="2">
    <location>
        <begin position="292"/>
        <end position="338"/>
    </location>
</feature>
<dbReference type="EMBL" id="AY521181">
    <property type="protein sequence ID" value="AAS98965.1"/>
    <property type="molecule type" value="mRNA"/>
</dbReference>
<dbReference type="RefSeq" id="NP_001041479.1">
    <property type="nucleotide sequence ID" value="NM_001048014.1"/>
</dbReference>
<dbReference type="SMR" id="Q5GJ04"/>
<dbReference type="STRING" id="9685.ENSFCAP00000001126"/>
<dbReference type="GlyCosmos" id="Q5GJ04">
    <property type="glycosylation" value="4 sites, No reported glycans"/>
</dbReference>
<dbReference type="PaxDb" id="9685-ENSFCAP00000001126"/>
<dbReference type="GeneID" id="554348"/>
<dbReference type="KEGG" id="fca:554348"/>
<dbReference type="CTD" id="2492"/>
<dbReference type="eggNOG" id="KOG2087">
    <property type="taxonomic scope" value="Eukaryota"/>
</dbReference>
<dbReference type="InParanoid" id="Q5GJ04"/>
<dbReference type="OrthoDB" id="5981530at2759"/>
<dbReference type="Proteomes" id="UP000011712">
    <property type="component" value="Unplaced"/>
</dbReference>
<dbReference type="GO" id="GO:0016020">
    <property type="term" value="C:membrane"/>
    <property type="evidence" value="ECO:0000250"/>
    <property type="project" value="UniProtKB"/>
</dbReference>
<dbReference type="GO" id="GO:0005886">
    <property type="term" value="C:plasma membrane"/>
    <property type="evidence" value="ECO:0000250"/>
    <property type="project" value="UniProtKB"/>
</dbReference>
<dbReference type="GO" id="GO:0043235">
    <property type="term" value="C:receptor complex"/>
    <property type="evidence" value="ECO:0000250"/>
    <property type="project" value="UniProtKB"/>
</dbReference>
<dbReference type="GO" id="GO:0004963">
    <property type="term" value="F:follicle-stimulating hormone receptor activity"/>
    <property type="evidence" value="ECO:0000250"/>
    <property type="project" value="UniProtKB"/>
</dbReference>
<dbReference type="GO" id="GO:0008528">
    <property type="term" value="F:G protein-coupled peptide receptor activity"/>
    <property type="evidence" value="ECO:0000318"/>
    <property type="project" value="GO_Central"/>
</dbReference>
<dbReference type="GO" id="GO:0007189">
    <property type="term" value="P:adenylate cyclase-activating G protein-coupled receptor signaling pathway"/>
    <property type="evidence" value="ECO:0000318"/>
    <property type="project" value="GO_Central"/>
</dbReference>
<dbReference type="GO" id="GO:0071372">
    <property type="term" value="P:cellular response to follicle-stimulating hormone stimulus"/>
    <property type="evidence" value="ECO:0000250"/>
    <property type="project" value="UniProtKB"/>
</dbReference>
<dbReference type="GO" id="GO:0042699">
    <property type="term" value="P:follicle-stimulating hormone signaling pathway"/>
    <property type="evidence" value="ECO:0000250"/>
    <property type="project" value="UniProtKB"/>
</dbReference>
<dbReference type="GO" id="GO:0007186">
    <property type="term" value="P:G protein-coupled receptor signaling pathway"/>
    <property type="evidence" value="ECO:0000250"/>
    <property type="project" value="UniProtKB"/>
</dbReference>
<dbReference type="GO" id="GO:0009755">
    <property type="term" value="P:hormone-mediated signaling pathway"/>
    <property type="evidence" value="ECO:0000318"/>
    <property type="project" value="GO_Central"/>
</dbReference>
<dbReference type="GO" id="GO:0008584">
    <property type="term" value="P:male gonad development"/>
    <property type="evidence" value="ECO:0000318"/>
    <property type="project" value="GO_Central"/>
</dbReference>
<dbReference type="GO" id="GO:0070374">
    <property type="term" value="P:positive regulation of ERK1 and ERK2 cascade"/>
    <property type="evidence" value="ECO:0000250"/>
    <property type="project" value="UniProtKB"/>
</dbReference>
<dbReference type="GO" id="GO:0051897">
    <property type="term" value="P:positive regulation of phosphatidylinositol 3-kinase/protein kinase B signal transduction"/>
    <property type="evidence" value="ECO:0000250"/>
    <property type="project" value="UniProtKB"/>
</dbReference>
<dbReference type="GO" id="GO:0010738">
    <property type="term" value="P:regulation of protein kinase A signaling"/>
    <property type="evidence" value="ECO:0000250"/>
    <property type="project" value="UniProtKB"/>
</dbReference>
<dbReference type="CDD" id="cd15360">
    <property type="entry name" value="7tmA_FSH-R"/>
    <property type="match status" value="1"/>
</dbReference>
<dbReference type="FunFam" id="1.20.1070.10:FF:000019">
    <property type="entry name" value="Lutropin-choriogonadotropic hormone receptor"/>
    <property type="match status" value="1"/>
</dbReference>
<dbReference type="Gene3D" id="1.20.1070.10">
    <property type="entry name" value="Rhodopsin 7-helix transmembrane proteins"/>
    <property type="match status" value="1"/>
</dbReference>
<dbReference type="Gene3D" id="3.80.10.10">
    <property type="entry name" value="Ribonuclease Inhibitor"/>
    <property type="match status" value="1"/>
</dbReference>
<dbReference type="InterPro" id="IPR002272">
    <property type="entry name" value="FSH_rcpt"/>
</dbReference>
<dbReference type="InterPro" id="IPR024635">
    <property type="entry name" value="GnHR_TM"/>
</dbReference>
<dbReference type="InterPro" id="IPR000276">
    <property type="entry name" value="GPCR_Rhodpsn"/>
</dbReference>
<dbReference type="InterPro" id="IPR017452">
    <property type="entry name" value="GPCR_Rhodpsn_7TM"/>
</dbReference>
<dbReference type="InterPro" id="IPR002131">
    <property type="entry name" value="Gphrmn_rcpt_fam"/>
</dbReference>
<dbReference type="InterPro" id="IPR026906">
    <property type="entry name" value="LRR_5"/>
</dbReference>
<dbReference type="InterPro" id="IPR032675">
    <property type="entry name" value="LRR_dom_sf"/>
</dbReference>
<dbReference type="InterPro" id="IPR000372">
    <property type="entry name" value="LRRNT"/>
</dbReference>
<dbReference type="PANTHER" id="PTHR24372:SF5">
    <property type="entry name" value="FOLLICLE-STIMULATING HORMONE RECEPTOR"/>
    <property type="match status" value="1"/>
</dbReference>
<dbReference type="PANTHER" id="PTHR24372">
    <property type="entry name" value="GLYCOPROTEIN HORMONE RECEPTOR"/>
    <property type="match status" value="1"/>
</dbReference>
<dbReference type="Pfam" id="PF00001">
    <property type="entry name" value="7tm_1"/>
    <property type="match status" value="1"/>
</dbReference>
<dbReference type="Pfam" id="PF12369">
    <property type="entry name" value="GnHR_trans"/>
    <property type="match status" value="1"/>
</dbReference>
<dbReference type="Pfam" id="PF13306">
    <property type="entry name" value="LRR_5"/>
    <property type="match status" value="2"/>
</dbReference>
<dbReference type="Pfam" id="PF01462">
    <property type="entry name" value="LRRNT"/>
    <property type="match status" value="1"/>
</dbReference>
<dbReference type="PRINTS" id="PR01143">
    <property type="entry name" value="FSHRECEPTOR"/>
</dbReference>
<dbReference type="PRINTS" id="PR00373">
    <property type="entry name" value="GLYCHORMONER"/>
</dbReference>
<dbReference type="PRINTS" id="PR00237">
    <property type="entry name" value="GPCRRHODOPSN"/>
</dbReference>
<dbReference type="SMART" id="SM00013">
    <property type="entry name" value="LRRNT"/>
    <property type="match status" value="1"/>
</dbReference>
<dbReference type="SUPFAM" id="SSF81321">
    <property type="entry name" value="Family A G protein-coupled receptor-like"/>
    <property type="match status" value="1"/>
</dbReference>
<dbReference type="SUPFAM" id="SSF52058">
    <property type="entry name" value="L domain-like"/>
    <property type="match status" value="1"/>
</dbReference>
<dbReference type="PROSITE" id="PS00237">
    <property type="entry name" value="G_PROTEIN_RECEP_F1_1"/>
    <property type="match status" value="1"/>
</dbReference>
<dbReference type="PROSITE" id="PS50262">
    <property type="entry name" value="G_PROTEIN_RECEP_F1_2"/>
    <property type="match status" value="1"/>
</dbReference>
<proteinExistence type="evidence at transcript level"/>
<organism>
    <name type="scientific">Felis catus</name>
    <name type="common">Cat</name>
    <name type="synonym">Felis silvestris catus</name>
    <dbReference type="NCBI Taxonomy" id="9685"/>
    <lineage>
        <taxon>Eukaryota</taxon>
        <taxon>Metazoa</taxon>
        <taxon>Chordata</taxon>
        <taxon>Craniata</taxon>
        <taxon>Vertebrata</taxon>
        <taxon>Euteleostomi</taxon>
        <taxon>Mammalia</taxon>
        <taxon>Eutheria</taxon>
        <taxon>Laurasiatheria</taxon>
        <taxon>Carnivora</taxon>
        <taxon>Feliformia</taxon>
        <taxon>Felidae</taxon>
        <taxon>Felinae</taxon>
        <taxon>Felis</taxon>
    </lineage>
</organism>
<reference key="1">
    <citation type="submission" date="2004-01" db="EMBL/GenBank/DDBJ databases">
        <title>Cloning and sequencing of cat FSH receptor cDNA.</title>
        <authorList>
            <person name="Neubauer K."/>
            <person name="Fickel J."/>
            <person name="Jewgenow K."/>
        </authorList>
    </citation>
    <scope>NUCLEOTIDE SEQUENCE [MRNA]</scope>
    <source>
        <tissue>Testis</tissue>
    </source>
</reference>
<protein>
    <recommendedName>
        <fullName>Follicle-stimulating hormone receptor</fullName>
        <shortName>FSH-R</shortName>
    </recommendedName>
    <alternativeName>
        <fullName>Follitropin receptor</fullName>
    </alternativeName>
</protein>
<evidence type="ECO:0000250" key="1">
    <source>
        <dbReference type="UniProtKB" id="P20395"/>
    </source>
</evidence>
<evidence type="ECO:0000250" key="2">
    <source>
        <dbReference type="UniProtKB" id="P23945"/>
    </source>
</evidence>
<evidence type="ECO:0000255" key="3"/>
<evidence type="ECO:0000255" key="4">
    <source>
        <dbReference type="PROSITE-ProRule" id="PRU00521"/>
    </source>
</evidence>
<gene>
    <name type="primary">FSHR</name>
</gene>
<comment type="function">
    <text evidence="2">G protein-coupled receptor for follitropin, the follicle-stimulating hormone. Through cAMP production activates the downstream PI3K-AKT and ERK1/ERK2 signaling pathways.</text>
</comment>
<comment type="subunit">
    <text evidence="1 2">Homotrimer. Functions as a homotrimer binding the FSH hormone heterodimer composed of CGA and FSHB (By similarity). Interacts with ARRB2 (By similarity). Interacts with APPL2; interaction is independent of follicle stimulating hormone stimulation (By similarity).</text>
</comment>
<comment type="subcellular location">
    <subcellularLocation>
        <location evidence="2">Cell membrane</location>
        <topology evidence="2">Multi-pass membrane protein</topology>
    </subcellularLocation>
</comment>
<comment type="PTM">
    <text evidence="1">N-glycosylated; indirectly required for FSH-binding, possibly via a conformational change that allows high affinity binding of hormone.</text>
</comment>
<comment type="PTM">
    <text evidence="2">Sulfated.</text>
</comment>
<comment type="similarity">
    <text evidence="4">Belongs to the G-protein coupled receptor 1 family. FSH/LSH/TSH subfamily.</text>
</comment>
<name>FSHR_FELCA</name>